<comment type="similarity">
    <text evidence="1">Belongs to the bacterial ribosomal protein bS21 family.</text>
</comment>
<accession>A8Z629</accession>
<sequence length="64" mass="7953">MKLIIYVKEGESIDRVLKKWKQKFDKARIIRKLRERQQYIKPSERKRKILTKAKYREFLISKNS</sequence>
<organism>
    <name type="scientific">Karelsulcia muelleri (strain GWSS)</name>
    <name type="common">Sulcia muelleri</name>
    <dbReference type="NCBI Taxonomy" id="444179"/>
    <lineage>
        <taxon>Bacteria</taxon>
        <taxon>Pseudomonadati</taxon>
        <taxon>Bacteroidota</taxon>
        <taxon>Flavobacteriia</taxon>
        <taxon>Flavobacteriales</taxon>
        <taxon>Candidatus Karelsulcia</taxon>
    </lineage>
</organism>
<protein>
    <recommendedName>
        <fullName evidence="1">Small ribosomal subunit protein bS21</fullName>
    </recommendedName>
    <alternativeName>
        <fullName evidence="2">30S ribosomal protein S21</fullName>
    </alternativeName>
</protein>
<gene>
    <name evidence="1" type="primary">rpsU</name>
    <name type="ordered locus">SMGWSS_179</name>
</gene>
<proteinExistence type="inferred from homology"/>
<name>RS21_KARMG</name>
<feature type="chain" id="PRO_1000079427" description="Small ribosomal subunit protein bS21">
    <location>
        <begin position="1"/>
        <end position="64"/>
    </location>
</feature>
<evidence type="ECO:0000255" key="1">
    <source>
        <dbReference type="HAMAP-Rule" id="MF_00358"/>
    </source>
</evidence>
<evidence type="ECO:0000305" key="2"/>
<dbReference type="EMBL" id="CP000770">
    <property type="protein sequence ID" value="ABS30580.1"/>
    <property type="molecule type" value="Genomic_DNA"/>
</dbReference>
<dbReference type="SMR" id="A8Z629"/>
<dbReference type="STRING" id="444179.SMGWSS_179"/>
<dbReference type="KEGG" id="smg:SMGWSS_179"/>
<dbReference type="HOGENOM" id="CLU_159258_2_1_10"/>
<dbReference type="Proteomes" id="UP000000781">
    <property type="component" value="Chromosome"/>
</dbReference>
<dbReference type="GO" id="GO:1990904">
    <property type="term" value="C:ribonucleoprotein complex"/>
    <property type="evidence" value="ECO:0007669"/>
    <property type="project" value="UniProtKB-KW"/>
</dbReference>
<dbReference type="GO" id="GO:0005840">
    <property type="term" value="C:ribosome"/>
    <property type="evidence" value="ECO:0007669"/>
    <property type="project" value="UniProtKB-KW"/>
</dbReference>
<dbReference type="GO" id="GO:0003735">
    <property type="term" value="F:structural constituent of ribosome"/>
    <property type="evidence" value="ECO:0007669"/>
    <property type="project" value="InterPro"/>
</dbReference>
<dbReference type="GO" id="GO:0006412">
    <property type="term" value="P:translation"/>
    <property type="evidence" value="ECO:0007669"/>
    <property type="project" value="UniProtKB-UniRule"/>
</dbReference>
<dbReference type="Gene3D" id="1.20.5.1150">
    <property type="entry name" value="Ribosomal protein S8"/>
    <property type="match status" value="1"/>
</dbReference>
<dbReference type="HAMAP" id="MF_00358">
    <property type="entry name" value="Ribosomal_bS21"/>
    <property type="match status" value="1"/>
</dbReference>
<dbReference type="InterPro" id="IPR001911">
    <property type="entry name" value="Ribosomal_bS21"/>
</dbReference>
<dbReference type="InterPro" id="IPR038380">
    <property type="entry name" value="Ribosomal_bS21_sf"/>
</dbReference>
<dbReference type="NCBIfam" id="TIGR00030">
    <property type="entry name" value="S21p"/>
    <property type="match status" value="1"/>
</dbReference>
<dbReference type="Pfam" id="PF01165">
    <property type="entry name" value="Ribosomal_S21"/>
    <property type="match status" value="1"/>
</dbReference>
<dbReference type="PRINTS" id="PR00976">
    <property type="entry name" value="RIBOSOMALS21"/>
</dbReference>
<keyword id="KW-0687">Ribonucleoprotein</keyword>
<keyword id="KW-0689">Ribosomal protein</keyword>
<reference key="1">
    <citation type="journal article" date="2007" name="Proc. Natl. Acad. Sci. U.S.A.">
        <title>Parallel genomic evolution and metabolic interdependence in an ancient symbiosis.</title>
        <authorList>
            <person name="McCutcheon J.P."/>
            <person name="Moran N.A."/>
        </authorList>
    </citation>
    <scope>NUCLEOTIDE SEQUENCE [LARGE SCALE GENOMIC DNA]</scope>
    <source>
        <strain>GWSS</strain>
    </source>
</reference>